<protein>
    <recommendedName>
        <fullName evidence="1">Asparagine--tRNA ligase</fullName>
        <ecNumber evidence="1">6.1.1.22</ecNumber>
    </recommendedName>
    <alternativeName>
        <fullName evidence="1">Asparaginyl-tRNA synthetase</fullName>
        <shortName evidence="1">AsnRS</shortName>
    </alternativeName>
</protein>
<name>SYN_STRA1</name>
<evidence type="ECO:0000255" key="1">
    <source>
        <dbReference type="HAMAP-Rule" id="MF_00534"/>
    </source>
</evidence>
<feature type="chain" id="PRO_1000051440" description="Asparagine--tRNA ligase">
    <location>
        <begin position="1"/>
        <end position="448"/>
    </location>
</feature>
<sequence>MSKKLISIVDVKDYVGQEVTIGAWVANKSGKGKIAFVQLRDGSAFFQGVAFKPNFIEKYGEESGLEKFDVIKRLNQETSVYVTGIVKEDERSKFGYELDITDLEVIGESHEYPITPKEHGTDFLMDNRHLWLRSRKQMAVMQIRNAIIYSTYEFFDQNGFIKFDSPILSENAAEDSTELFETDYFGKPAFLSQSGQLYLEAGAMALGRVFDFGPVFRAEKSKTRRHLTEFWMMDAEYSFLSHEESLDLQEAYVKALIQGVLDRAPQALDILERDVEALKRYIAEPFKRVSYDDAITLLQEHEADEDTDYEHLEHGDDFGSPHETWISNYFGVPTFVVNYPASFKAFYMKPVPGNPERVLCADLLAPEGYGEIIGGSMREDDYDALVAKMDELGMDKSEYDFYLDLRKYGSVPHGGFGIGIERMVTFVAGTKHIREAIPFPRMLHRIKP</sequence>
<organism>
    <name type="scientific">Streptococcus agalactiae serotype Ia (strain ATCC 27591 / A909 / CDC SS700)</name>
    <dbReference type="NCBI Taxonomy" id="205921"/>
    <lineage>
        <taxon>Bacteria</taxon>
        <taxon>Bacillati</taxon>
        <taxon>Bacillota</taxon>
        <taxon>Bacilli</taxon>
        <taxon>Lactobacillales</taxon>
        <taxon>Streptococcaceae</taxon>
        <taxon>Streptococcus</taxon>
    </lineage>
</organism>
<proteinExistence type="inferred from homology"/>
<gene>
    <name evidence="1" type="primary">asnS</name>
    <name type="ordered locus">SAK_0677</name>
</gene>
<reference key="1">
    <citation type="journal article" date="2005" name="Proc. Natl. Acad. Sci. U.S.A.">
        <title>Genome analysis of multiple pathogenic isolates of Streptococcus agalactiae: implications for the microbial 'pan-genome'.</title>
        <authorList>
            <person name="Tettelin H."/>
            <person name="Masignani V."/>
            <person name="Cieslewicz M.J."/>
            <person name="Donati C."/>
            <person name="Medini D."/>
            <person name="Ward N.L."/>
            <person name="Angiuoli S.V."/>
            <person name="Crabtree J."/>
            <person name="Jones A.L."/>
            <person name="Durkin A.S."/>
            <person name="DeBoy R.T."/>
            <person name="Davidsen T.M."/>
            <person name="Mora M."/>
            <person name="Scarselli M."/>
            <person name="Margarit y Ros I."/>
            <person name="Peterson J.D."/>
            <person name="Hauser C.R."/>
            <person name="Sundaram J.P."/>
            <person name="Nelson W.C."/>
            <person name="Madupu R."/>
            <person name="Brinkac L.M."/>
            <person name="Dodson R.J."/>
            <person name="Rosovitz M.J."/>
            <person name="Sullivan S.A."/>
            <person name="Daugherty S.C."/>
            <person name="Haft D.H."/>
            <person name="Selengut J."/>
            <person name="Gwinn M.L."/>
            <person name="Zhou L."/>
            <person name="Zafar N."/>
            <person name="Khouri H."/>
            <person name="Radune D."/>
            <person name="Dimitrov G."/>
            <person name="Watkins K."/>
            <person name="O'Connor K.J."/>
            <person name="Smith S."/>
            <person name="Utterback T.R."/>
            <person name="White O."/>
            <person name="Rubens C.E."/>
            <person name="Grandi G."/>
            <person name="Madoff L.C."/>
            <person name="Kasper D.L."/>
            <person name="Telford J.L."/>
            <person name="Wessels M.R."/>
            <person name="Rappuoli R."/>
            <person name="Fraser C.M."/>
        </authorList>
    </citation>
    <scope>NUCLEOTIDE SEQUENCE [LARGE SCALE GENOMIC DNA]</scope>
    <source>
        <strain>ATCC 27591 / A909 / CDC SS700</strain>
    </source>
</reference>
<dbReference type="EC" id="6.1.1.22" evidence="1"/>
<dbReference type="EMBL" id="CP000114">
    <property type="protein sequence ID" value="ABA45162.1"/>
    <property type="molecule type" value="Genomic_DNA"/>
</dbReference>
<dbReference type="RefSeq" id="WP_000038470.1">
    <property type="nucleotide sequence ID" value="NC_007432.1"/>
</dbReference>
<dbReference type="SMR" id="Q3K2E5"/>
<dbReference type="KEGG" id="sak:SAK_0677"/>
<dbReference type="HOGENOM" id="CLU_004553_2_0_9"/>
<dbReference type="GO" id="GO:0005737">
    <property type="term" value="C:cytoplasm"/>
    <property type="evidence" value="ECO:0007669"/>
    <property type="project" value="UniProtKB-SubCell"/>
</dbReference>
<dbReference type="GO" id="GO:0004816">
    <property type="term" value="F:asparagine-tRNA ligase activity"/>
    <property type="evidence" value="ECO:0007669"/>
    <property type="project" value="UniProtKB-UniRule"/>
</dbReference>
<dbReference type="GO" id="GO:0005524">
    <property type="term" value="F:ATP binding"/>
    <property type="evidence" value="ECO:0007669"/>
    <property type="project" value="UniProtKB-UniRule"/>
</dbReference>
<dbReference type="GO" id="GO:0140096">
    <property type="term" value="F:catalytic activity, acting on a protein"/>
    <property type="evidence" value="ECO:0007669"/>
    <property type="project" value="UniProtKB-ARBA"/>
</dbReference>
<dbReference type="GO" id="GO:0003676">
    <property type="term" value="F:nucleic acid binding"/>
    <property type="evidence" value="ECO:0007669"/>
    <property type="project" value="InterPro"/>
</dbReference>
<dbReference type="GO" id="GO:0016740">
    <property type="term" value="F:transferase activity"/>
    <property type="evidence" value="ECO:0007669"/>
    <property type="project" value="UniProtKB-ARBA"/>
</dbReference>
<dbReference type="GO" id="GO:0006421">
    <property type="term" value="P:asparaginyl-tRNA aminoacylation"/>
    <property type="evidence" value="ECO:0007669"/>
    <property type="project" value="UniProtKB-UniRule"/>
</dbReference>
<dbReference type="CDD" id="cd04323">
    <property type="entry name" value="AsnRS_cyto_like_N"/>
    <property type="match status" value="1"/>
</dbReference>
<dbReference type="CDD" id="cd00776">
    <property type="entry name" value="AsxRS_core"/>
    <property type="match status" value="1"/>
</dbReference>
<dbReference type="Gene3D" id="3.30.930.10">
    <property type="entry name" value="Bira Bifunctional Protein, Domain 2"/>
    <property type="match status" value="1"/>
</dbReference>
<dbReference type="Gene3D" id="2.40.50.140">
    <property type="entry name" value="Nucleic acid-binding proteins"/>
    <property type="match status" value="1"/>
</dbReference>
<dbReference type="HAMAP" id="MF_00534">
    <property type="entry name" value="Asn_tRNA_synth"/>
    <property type="match status" value="1"/>
</dbReference>
<dbReference type="InterPro" id="IPR004364">
    <property type="entry name" value="Aa-tRNA-synt_II"/>
</dbReference>
<dbReference type="InterPro" id="IPR006195">
    <property type="entry name" value="aa-tRNA-synth_II"/>
</dbReference>
<dbReference type="InterPro" id="IPR045864">
    <property type="entry name" value="aa-tRNA-synth_II/BPL/LPL"/>
</dbReference>
<dbReference type="InterPro" id="IPR004522">
    <property type="entry name" value="Asn-tRNA-ligase"/>
</dbReference>
<dbReference type="InterPro" id="IPR002312">
    <property type="entry name" value="Asp/Asn-tRNA-synth_IIb"/>
</dbReference>
<dbReference type="InterPro" id="IPR012340">
    <property type="entry name" value="NA-bd_OB-fold"/>
</dbReference>
<dbReference type="InterPro" id="IPR004365">
    <property type="entry name" value="NA-bd_OB_tRNA"/>
</dbReference>
<dbReference type="NCBIfam" id="TIGR00457">
    <property type="entry name" value="asnS"/>
    <property type="match status" value="1"/>
</dbReference>
<dbReference type="NCBIfam" id="NF003037">
    <property type="entry name" value="PRK03932.1"/>
    <property type="match status" value="1"/>
</dbReference>
<dbReference type="PANTHER" id="PTHR22594:SF34">
    <property type="entry name" value="ASPARAGINE--TRNA LIGASE, MITOCHONDRIAL-RELATED"/>
    <property type="match status" value="1"/>
</dbReference>
<dbReference type="PANTHER" id="PTHR22594">
    <property type="entry name" value="ASPARTYL/LYSYL-TRNA SYNTHETASE"/>
    <property type="match status" value="1"/>
</dbReference>
<dbReference type="Pfam" id="PF00152">
    <property type="entry name" value="tRNA-synt_2"/>
    <property type="match status" value="1"/>
</dbReference>
<dbReference type="Pfam" id="PF01336">
    <property type="entry name" value="tRNA_anti-codon"/>
    <property type="match status" value="1"/>
</dbReference>
<dbReference type="PRINTS" id="PR01042">
    <property type="entry name" value="TRNASYNTHASP"/>
</dbReference>
<dbReference type="SUPFAM" id="SSF55681">
    <property type="entry name" value="Class II aaRS and biotin synthetases"/>
    <property type="match status" value="1"/>
</dbReference>
<dbReference type="SUPFAM" id="SSF50249">
    <property type="entry name" value="Nucleic acid-binding proteins"/>
    <property type="match status" value="1"/>
</dbReference>
<dbReference type="PROSITE" id="PS50862">
    <property type="entry name" value="AA_TRNA_LIGASE_II"/>
    <property type="match status" value="1"/>
</dbReference>
<accession>Q3K2E5</accession>
<comment type="catalytic activity">
    <reaction evidence="1">
        <text>tRNA(Asn) + L-asparagine + ATP = L-asparaginyl-tRNA(Asn) + AMP + diphosphate + H(+)</text>
        <dbReference type="Rhea" id="RHEA:11180"/>
        <dbReference type="Rhea" id="RHEA-COMP:9659"/>
        <dbReference type="Rhea" id="RHEA-COMP:9674"/>
        <dbReference type="ChEBI" id="CHEBI:15378"/>
        <dbReference type="ChEBI" id="CHEBI:30616"/>
        <dbReference type="ChEBI" id="CHEBI:33019"/>
        <dbReference type="ChEBI" id="CHEBI:58048"/>
        <dbReference type="ChEBI" id="CHEBI:78442"/>
        <dbReference type="ChEBI" id="CHEBI:78515"/>
        <dbReference type="ChEBI" id="CHEBI:456215"/>
        <dbReference type="EC" id="6.1.1.22"/>
    </reaction>
</comment>
<comment type="subunit">
    <text evidence="1">Homodimer.</text>
</comment>
<comment type="subcellular location">
    <subcellularLocation>
        <location evidence="1">Cytoplasm</location>
    </subcellularLocation>
</comment>
<comment type="similarity">
    <text evidence="1">Belongs to the class-II aminoacyl-tRNA synthetase family.</text>
</comment>
<keyword id="KW-0030">Aminoacyl-tRNA synthetase</keyword>
<keyword id="KW-0067">ATP-binding</keyword>
<keyword id="KW-0963">Cytoplasm</keyword>
<keyword id="KW-0436">Ligase</keyword>
<keyword id="KW-0547">Nucleotide-binding</keyword>
<keyword id="KW-0648">Protein biosynthesis</keyword>